<evidence type="ECO:0000255" key="1">
    <source>
        <dbReference type="HAMAP-Rule" id="MF_00323"/>
    </source>
</evidence>
<feature type="chain" id="PRO_0000175226" description="Ferrochelatase">
    <location>
        <begin position="1"/>
        <end position="321"/>
    </location>
</feature>
<feature type="binding site" evidence="1">
    <location>
        <position position="194"/>
    </location>
    <ligand>
        <name>Fe cation</name>
        <dbReference type="ChEBI" id="CHEBI:24875"/>
    </ligand>
</feature>
<feature type="binding site" evidence="1">
    <location>
        <position position="275"/>
    </location>
    <ligand>
        <name>Fe cation</name>
        <dbReference type="ChEBI" id="CHEBI:24875"/>
    </ligand>
</feature>
<name>HEMH_WIGBR</name>
<gene>
    <name evidence="1" type="primary">hemH</name>
    <name type="ordered locus">WIGBR5290</name>
</gene>
<organism>
    <name type="scientific">Wigglesworthia glossinidia brevipalpis</name>
    <dbReference type="NCBI Taxonomy" id="36870"/>
    <lineage>
        <taxon>Bacteria</taxon>
        <taxon>Pseudomonadati</taxon>
        <taxon>Pseudomonadota</taxon>
        <taxon>Gammaproteobacteria</taxon>
        <taxon>Enterobacterales</taxon>
        <taxon>Erwiniaceae</taxon>
        <taxon>Wigglesworthia</taxon>
    </lineage>
</organism>
<sequence>MKNNIGIIISNVGTPSHPNKKSVKKYLSEFLSDKRVIDISRFFWIPYLHLYFLPLKSYKSVNLYKKIWEKDGSPLMINSLNQRNYLINKFPNFKIELGMRYGDPSICVAIKKMIKIYNVNKLIILPMYPQYSCTTTASVLDSVCEVIKKYRNIPSIIFIRDYADNINYINAITNSIKKSFNKNGIPEMLIMSFHGIPKKYIKDGDDYLKRCNVTKKLVLSKLNFSRKKVIMSFQSKFGNIPWITPITSEVISFLPKKGIKNIQVICPGFSSDCLETLEEIKIQNKKIFKDNGGKKFHYIPALNYSKIHIECLANIIRTHLK</sequence>
<comment type="function">
    <text evidence="1">Catalyzes the ferrous insertion into protoporphyrin IX.</text>
</comment>
<comment type="catalytic activity">
    <reaction evidence="1">
        <text>heme b + 2 H(+) = protoporphyrin IX + Fe(2+)</text>
        <dbReference type="Rhea" id="RHEA:22584"/>
        <dbReference type="ChEBI" id="CHEBI:15378"/>
        <dbReference type="ChEBI" id="CHEBI:29033"/>
        <dbReference type="ChEBI" id="CHEBI:57306"/>
        <dbReference type="ChEBI" id="CHEBI:60344"/>
        <dbReference type="EC" id="4.98.1.1"/>
    </reaction>
</comment>
<comment type="pathway">
    <text evidence="1">Porphyrin-containing compound metabolism; protoheme biosynthesis; protoheme from protoporphyrin-IX: step 1/1.</text>
</comment>
<comment type="subcellular location">
    <subcellularLocation>
        <location evidence="1">Cytoplasm</location>
    </subcellularLocation>
</comment>
<comment type="similarity">
    <text evidence="1">Belongs to the ferrochelatase family.</text>
</comment>
<accession>Q8D226</accession>
<proteinExistence type="inferred from homology"/>
<keyword id="KW-0963">Cytoplasm</keyword>
<keyword id="KW-0350">Heme biosynthesis</keyword>
<keyword id="KW-0408">Iron</keyword>
<keyword id="KW-0456">Lyase</keyword>
<keyword id="KW-0479">Metal-binding</keyword>
<keyword id="KW-0627">Porphyrin biosynthesis</keyword>
<keyword id="KW-1185">Reference proteome</keyword>
<reference key="1">
    <citation type="journal article" date="2002" name="Nat. Genet.">
        <title>Genome sequence of the endocellular obligate symbiont of tsetse flies, Wigglesworthia glossinidia.</title>
        <authorList>
            <person name="Akman L."/>
            <person name="Yamashita A."/>
            <person name="Watanabe H."/>
            <person name="Oshima K."/>
            <person name="Shiba T."/>
            <person name="Hattori M."/>
            <person name="Aksoy S."/>
        </authorList>
    </citation>
    <scope>NUCLEOTIDE SEQUENCE [LARGE SCALE GENOMIC DNA]</scope>
</reference>
<dbReference type="EC" id="4.98.1.1" evidence="1"/>
<dbReference type="EMBL" id="BA000021">
    <property type="protein sequence ID" value="BAC24675.1"/>
    <property type="molecule type" value="Genomic_DNA"/>
</dbReference>
<dbReference type="SMR" id="Q8D226"/>
<dbReference type="STRING" id="36870.gene:10369037"/>
<dbReference type="KEGG" id="wbr:hemH"/>
<dbReference type="eggNOG" id="COG0276">
    <property type="taxonomic scope" value="Bacteria"/>
</dbReference>
<dbReference type="HOGENOM" id="CLU_018884_0_0_6"/>
<dbReference type="OrthoDB" id="9809741at2"/>
<dbReference type="UniPathway" id="UPA00252">
    <property type="reaction ID" value="UER00325"/>
</dbReference>
<dbReference type="Proteomes" id="UP000000562">
    <property type="component" value="Chromosome"/>
</dbReference>
<dbReference type="GO" id="GO:0005737">
    <property type="term" value="C:cytoplasm"/>
    <property type="evidence" value="ECO:0007669"/>
    <property type="project" value="UniProtKB-SubCell"/>
</dbReference>
<dbReference type="GO" id="GO:0004325">
    <property type="term" value="F:ferrochelatase activity"/>
    <property type="evidence" value="ECO:0007669"/>
    <property type="project" value="UniProtKB-UniRule"/>
</dbReference>
<dbReference type="GO" id="GO:0046872">
    <property type="term" value="F:metal ion binding"/>
    <property type="evidence" value="ECO:0007669"/>
    <property type="project" value="UniProtKB-KW"/>
</dbReference>
<dbReference type="GO" id="GO:0006783">
    <property type="term" value="P:heme biosynthetic process"/>
    <property type="evidence" value="ECO:0007669"/>
    <property type="project" value="UniProtKB-UniRule"/>
</dbReference>
<dbReference type="CDD" id="cd00419">
    <property type="entry name" value="Ferrochelatase_C"/>
    <property type="match status" value="1"/>
</dbReference>
<dbReference type="CDD" id="cd03411">
    <property type="entry name" value="Ferrochelatase_N"/>
    <property type="match status" value="1"/>
</dbReference>
<dbReference type="FunFam" id="3.40.50.1400:FF:000002">
    <property type="entry name" value="Ferrochelatase"/>
    <property type="match status" value="1"/>
</dbReference>
<dbReference type="Gene3D" id="3.40.50.1400">
    <property type="match status" value="2"/>
</dbReference>
<dbReference type="HAMAP" id="MF_00323">
    <property type="entry name" value="Ferrochelatase"/>
    <property type="match status" value="1"/>
</dbReference>
<dbReference type="InterPro" id="IPR001015">
    <property type="entry name" value="Ferrochelatase"/>
</dbReference>
<dbReference type="InterPro" id="IPR019772">
    <property type="entry name" value="Ferrochelatase_AS"/>
</dbReference>
<dbReference type="InterPro" id="IPR033644">
    <property type="entry name" value="Ferrochelatase_C"/>
</dbReference>
<dbReference type="InterPro" id="IPR033659">
    <property type="entry name" value="Ferrochelatase_N"/>
</dbReference>
<dbReference type="NCBIfam" id="TIGR00109">
    <property type="entry name" value="hemH"/>
    <property type="match status" value="1"/>
</dbReference>
<dbReference type="PANTHER" id="PTHR11108">
    <property type="entry name" value="FERROCHELATASE"/>
    <property type="match status" value="1"/>
</dbReference>
<dbReference type="PANTHER" id="PTHR11108:SF1">
    <property type="entry name" value="FERROCHELATASE, MITOCHONDRIAL"/>
    <property type="match status" value="1"/>
</dbReference>
<dbReference type="Pfam" id="PF00762">
    <property type="entry name" value="Ferrochelatase"/>
    <property type="match status" value="1"/>
</dbReference>
<dbReference type="SUPFAM" id="SSF53800">
    <property type="entry name" value="Chelatase"/>
    <property type="match status" value="1"/>
</dbReference>
<dbReference type="PROSITE" id="PS00534">
    <property type="entry name" value="FERROCHELATASE"/>
    <property type="match status" value="1"/>
</dbReference>
<protein>
    <recommendedName>
        <fullName evidence="1">Ferrochelatase</fullName>
        <ecNumber evidence="1">4.98.1.1</ecNumber>
    </recommendedName>
    <alternativeName>
        <fullName evidence="1">Heme synthase</fullName>
    </alternativeName>
    <alternativeName>
        <fullName evidence="1">Protoheme ferro-lyase</fullName>
    </alternativeName>
</protein>